<comment type="function">
    <text evidence="1">This protein is involved in the repair of mismatches in DNA. It is possible that it carries out the mismatch recognition step. This protein has a weak ATPase activity.</text>
</comment>
<comment type="similarity">
    <text evidence="1">Belongs to the DNA mismatch repair MutS family.</text>
</comment>
<proteinExistence type="inferred from homology"/>
<gene>
    <name evidence="1" type="primary">mutS</name>
    <name type="ordered locus">BCE_3803</name>
</gene>
<accession>P61665</accession>
<keyword id="KW-0067">ATP-binding</keyword>
<keyword id="KW-0227">DNA damage</keyword>
<keyword id="KW-0234">DNA repair</keyword>
<keyword id="KW-0238">DNA-binding</keyword>
<keyword id="KW-0547">Nucleotide-binding</keyword>
<evidence type="ECO:0000255" key="1">
    <source>
        <dbReference type="HAMAP-Rule" id="MF_00096"/>
    </source>
</evidence>
<evidence type="ECO:0000256" key="2">
    <source>
        <dbReference type="SAM" id="MobiDB-lite"/>
    </source>
</evidence>
<protein>
    <recommendedName>
        <fullName evidence="1">DNA mismatch repair protein MutS</fullName>
    </recommendedName>
</protein>
<organism>
    <name type="scientific">Bacillus cereus (strain ATCC 10987 / NRS 248)</name>
    <dbReference type="NCBI Taxonomy" id="222523"/>
    <lineage>
        <taxon>Bacteria</taxon>
        <taxon>Bacillati</taxon>
        <taxon>Bacillota</taxon>
        <taxon>Bacilli</taxon>
        <taxon>Bacillales</taxon>
        <taxon>Bacillaceae</taxon>
        <taxon>Bacillus</taxon>
        <taxon>Bacillus cereus group</taxon>
    </lineage>
</organism>
<dbReference type="EMBL" id="AE017194">
    <property type="protein sequence ID" value="AAS42708.1"/>
    <property type="molecule type" value="Genomic_DNA"/>
</dbReference>
<dbReference type="SMR" id="P61665"/>
<dbReference type="KEGG" id="bca:BCE_3803"/>
<dbReference type="HOGENOM" id="CLU_002472_3_2_9"/>
<dbReference type="Proteomes" id="UP000002527">
    <property type="component" value="Chromosome"/>
</dbReference>
<dbReference type="GO" id="GO:0005829">
    <property type="term" value="C:cytosol"/>
    <property type="evidence" value="ECO:0007669"/>
    <property type="project" value="TreeGrafter"/>
</dbReference>
<dbReference type="GO" id="GO:0005524">
    <property type="term" value="F:ATP binding"/>
    <property type="evidence" value="ECO:0007669"/>
    <property type="project" value="UniProtKB-UniRule"/>
</dbReference>
<dbReference type="GO" id="GO:0140664">
    <property type="term" value="F:ATP-dependent DNA damage sensor activity"/>
    <property type="evidence" value="ECO:0007669"/>
    <property type="project" value="InterPro"/>
</dbReference>
<dbReference type="GO" id="GO:0003684">
    <property type="term" value="F:damaged DNA binding"/>
    <property type="evidence" value="ECO:0007669"/>
    <property type="project" value="UniProtKB-UniRule"/>
</dbReference>
<dbReference type="GO" id="GO:0030983">
    <property type="term" value="F:mismatched DNA binding"/>
    <property type="evidence" value="ECO:0007669"/>
    <property type="project" value="InterPro"/>
</dbReference>
<dbReference type="GO" id="GO:0006298">
    <property type="term" value="P:mismatch repair"/>
    <property type="evidence" value="ECO:0007669"/>
    <property type="project" value="UniProtKB-UniRule"/>
</dbReference>
<dbReference type="CDD" id="cd03284">
    <property type="entry name" value="ABC_MutS1"/>
    <property type="match status" value="1"/>
</dbReference>
<dbReference type="FunFam" id="1.10.1420.10:FF:000007">
    <property type="entry name" value="DNA mismatch repair protein MutS"/>
    <property type="match status" value="1"/>
</dbReference>
<dbReference type="FunFam" id="3.30.420.110:FF:000007">
    <property type="entry name" value="DNA mismatch repair protein MutS"/>
    <property type="match status" value="1"/>
</dbReference>
<dbReference type="FunFam" id="3.40.1170.10:FF:000001">
    <property type="entry name" value="DNA mismatch repair protein MutS"/>
    <property type="match status" value="1"/>
</dbReference>
<dbReference type="FunFam" id="3.40.50.300:FF:000896">
    <property type="entry name" value="DNA mismatch repair protein MutS"/>
    <property type="match status" value="1"/>
</dbReference>
<dbReference type="Gene3D" id="1.10.1420.10">
    <property type="match status" value="2"/>
</dbReference>
<dbReference type="Gene3D" id="3.40.1170.10">
    <property type="entry name" value="DNA repair protein MutS, domain I"/>
    <property type="match status" value="1"/>
</dbReference>
<dbReference type="Gene3D" id="3.30.420.110">
    <property type="entry name" value="MutS, connector domain"/>
    <property type="match status" value="1"/>
</dbReference>
<dbReference type="Gene3D" id="3.40.50.300">
    <property type="entry name" value="P-loop containing nucleotide triphosphate hydrolases"/>
    <property type="match status" value="1"/>
</dbReference>
<dbReference type="HAMAP" id="MF_00096">
    <property type="entry name" value="MutS"/>
    <property type="match status" value="1"/>
</dbReference>
<dbReference type="InterPro" id="IPR005748">
    <property type="entry name" value="DNA_mismatch_repair_MutS"/>
</dbReference>
<dbReference type="InterPro" id="IPR007695">
    <property type="entry name" value="DNA_mismatch_repair_MutS-lik_N"/>
</dbReference>
<dbReference type="InterPro" id="IPR017261">
    <property type="entry name" value="DNA_mismatch_repair_MutS/MSH"/>
</dbReference>
<dbReference type="InterPro" id="IPR000432">
    <property type="entry name" value="DNA_mismatch_repair_MutS_C"/>
</dbReference>
<dbReference type="InterPro" id="IPR007861">
    <property type="entry name" value="DNA_mismatch_repair_MutS_clamp"/>
</dbReference>
<dbReference type="InterPro" id="IPR007696">
    <property type="entry name" value="DNA_mismatch_repair_MutS_core"/>
</dbReference>
<dbReference type="InterPro" id="IPR016151">
    <property type="entry name" value="DNA_mismatch_repair_MutS_N"/>
</dbReference>
<dbReference type="InterPro" id="IPR036187">
    <property type="entry name" value="DNA_mismatch_repair_MutS_sf"/>
</dbReference>
<dbReference type="InterPro" id="IPR007860">
    <property type="entry name" value="DNA_mmatch_repair_MutS_con_dom"/>
</dbReference>
<dbReference type="InterPro" id="IPR045076">
    <property type="entry name" value="MutS"/>
</dbReference>
<dbReference type="InterPro" id="IPR036678">
    <property type="entry name" value="MutS_con_dom_sf"/>
</dbReference>
<dbReference type="InterPro" id="IPR027417">
    <property type="entry name" value="P-loop_NTPase"/>
</dbReference>
<dbReference type="NCBIfam" id="TIGR01070">
    <property type="entry name" value="mutS1"/>
    <property type="match status" value="1"/>
</dbReference>
<dbReference type="NCBIfam" id="NF003810">
    <property type="entry name" value="PRK05399.1"/>
    <property type="match status" value="1"/>
</dbReference>
<dbReference type="PANTHER" id="PTHR11361:SF34">
    <property type="entry name" value="DNA MISMATCH REPAIR PROTEIN MSH1, MITOCHONDRIAL"/>
    <property type="match status" value="1"/>
</dbReference>
<dbReference type="PANTHER" id="PTHR11361">
    <property type="entry name" value="DNA MISMATCH REPAIR PROTEIN MUTS FAMILY MEMBER"/>
    <property type="match status" value="1"/>
</dbReference>
<dbReference type="Pfam" id="PF01624">
    <property type="entry name" value="MutS_I"/>
    <property type="match status" value="1"/>
</dbReference>
<dbReference type="Pfam" id="PF05188">
    <property type="entry name" value="MutS_II"/>
    <property type="match status" value="1"/>
</dbReference>
<dbReference type="Pfam" id="PF05192">
    <property type="entry name" value="MutS_III"/>
    <property type="match status" value="1"/>
</dbReference>
<dbReference type="Pfam" id="PF05190">
    <property type="entry name" value="MutS_IV"/>
    <property type="match status" value="1"/>
</dbReference>
<dbReference type="Pfam" id="PF00488">
    <property type="entry name" value="MutS_V"/>
    <property type="match status" value="1"/>
</dbReference>
<dbReference type="PIRSF" id="PIRSF037677">
    <property type="entry name" value="DNA_mis_repair_Msh6"/>
    <property type="match status" value="1"/>
</dbReference>
<dbReference type="SMART" id="SM00534">
    <property type="entry name" value="MUTSac"/>
    <property type="match status" value="1"/>
</dbReference>
<dbReference type="SMART" id="SM00533">
    <property type="entry name" value="MUTSd"/>
    <property type="match status" value="1"/>
</dbReference>
<dbReference type="SUPFAM" id="SSF55271">
    <property type="entry name" value="DNA repair protein MutS, domain I"/>
    <property type="match status" value="1"/>
</dbReference>
<dbReference type="SUPFAM" id="SSF53150">
    <property type="entry name" value="DNA repair protein MutS, domain II"/>
    <property type="match status" value="1"/>
</dbReference>
<dbReference type="SUPFAM" id="SSF48334">
    <property type="entry name" value="DNA repair protein MutS, domain III"/>
    <property type="match status" value="1"/>
</dbReference>
<dbReference type="SUPFAM" id="SSF52540">
    <property type="entry name" value="P-loop containing nucleoside triphosphate hydrolases"/>
    <property type="match status" value="1"/>
</dbReference>
<dbReference type="PROSITE" id="PS00486">
    <property type="entry name" value="DNA_MISMATCH_REPAIR_2"/>
    <property type="match status" value="1"/>
</dbReference>
<reference key="1">
    <citation type="journal article" date="2004" name="Nucleic Acids Res.">
        <title>The genome sequence of Bacillus cereus ATCC 10987 reveals metabolic adaptations and a large plasmid related to Bacillus anthracis pXO1.</title>
        <authorList>
            <person name="Rasko D.A."/>
            <person name="Ravel J."/>
            <person name="Oekstad O.A."/>
            <person name="Helgason E."/>
            <person name="Cer R.Z."/>
            <person name="Jiang L."/>
            <person name="Shores K.A."/>
            <person name="Fouts D.E."/>
            <person name="Tourasse N.J."/>
            <person name="Angiuoli S.V."/>
            <person name="Kolonay J.F."/>
            <person name="Nelson W.C."/>
            <person name="Kolstoe A.-B."/>
            <person name="Fraser C.M."/>
            <person name="Read T.D."/>
        </authorList>
    </citation>
    <scope>NUCLEOTIDE SEQUENCE [LARGE SCALE GENOMIC DNA]</scope>
    <source>
        <strain>ATCC 10987 / NRS 248</strain>
    </source>
</reference>
<name>MUTS_BACC1</name>
<sequence>MTQYTPMIQQYLKVKADYQDAFLFFRLGDFYEMFFEDAVKAAHELEITLTSRDGGSSERIPMCGVPYHAAKNYIEQLVEKGYKVAVCEQVEDPKTAKGVVRREVVQLITPGTMMEGRTIDEKENNFLAALTHFEDGSYALACNDLTTGQNTVTLLTGSVEDILLEVYATGSKEIVVDSSFSKDELNKLTETLKMTISYEDATAIPEGLEHLVKNVSQAKLIKAVGRLFNYVIRTQKRSLDHLQPVEIYYTNQFMKIDVHSKRNLELTETLRTKEKTGSLLWLLDKTKTAMGGRMLKQWMERPLIQKERIEERLEMVETFVNDYFLREDLKEKLKEVYDLERLAGKVAFGNVNARDLLQLRRSLLQVPAILEAISLLDNAYAARLIQGADPCESLTELLGRSIQENPPLSIKDGDIIKDGYNDKLDQYRYVSKNGKTWIAELEKRERDITGIKSLKIGYNRIFGYYIEVTKANLGALPEGRYERKQTLANAERFITDELKEKETLILEAEEKIVQLEYDLFTALREEVKVFIPKLQHLAKVISELDVLQSFATVSEEEQFVKPVLTTKREIFIKDGRHPVVEKVLNGKLYVPNDCIMPENMDVFLITGPNMSGKSTYMRQLALVTVMSQIGCFVPATEAVLPVFDQIFTRIGAADDLISGQSTFMVEMLEAKNAIANASERSLILFDEIGRGTSTYDGMALAQAIIEHIHDQIGAKTLFSTHYHELTVLEESLDQLKNVHVSAIEENGKVVFLHKIQDGAADKSYGIHVAQLAELPDSLIARAKEVLAQLEGQEEIIIPKRVEVKMQEQEVIPEPVVVKEAPVEIEETKVENEEESQLSFFGGEQSPKKQDKPVLDTKETAVLAQIKKIDLLDMTPLEAMNELYRLQKKLKKG</sequence>
<feature type="chain" id="PRO_0000115067" description="DNA mismatch repair protein MutS">
    <location>
        <begin position="1"/>
        <end position="892"/>
    </location>
</feature>
<feature type="region of interest" description="Disordered" evidence="2">
    <location>
        <begin position="833"/>
        <end position="854"/>
    </location>
</feature>
<feature type="compositionally biased region" description="Basic and acidic residues" evidence="2">
    <location>
        <begin position="845"/>
        <end position="854"/>
    </location>
</feature>
<feature type="binding site" evidence="1">
    <location>
        <begin position="607"/>
        <end position="614"/>
    </location>
    <ligand>
        <name>ATP</name>
        <dbReference type="ChEBI" id="CHEBI:30616"/>
    </ligand>
</feature>